<feature type="chain" id="PRO_0000129049" description="Hydrogenase maturation factor HypA">
    <location>
        <begin position="1"/>
        <end position="118"/>
    </location>
</feature>
<feature type="binding site" evidence="1">
    <location>
        <position position="2"/>
    </location>
    <ligand>
        <name>Ni(2+)</name>
        <dbReference type="ChEBI" id="CHEBI:49786"/>
    </ligand>
</feature>
<feature type="binding site" evidence="1">
    <location>
        <position position="73"/>
    </location>
    <ligand>
        <name>Zn(2+)</name>
        <dbReference type="ChEBI" id="CHEBI:29105"/>
    </ligand>
</feature>
<feature type="binding site" evidence="1">
    <location>
        <position position="76"/>
    </location>
    <ligand>
        <name>Zn(2+)</name>
        <dbReference type="ChEBI" id="CHEBI:29105"/>
    </ligand>
</feature>
<feature type="binding site" evidence="1">
    <location>
        <position position="89"/>
    </location>
    <ligand>
        <name>Zn(2+)</name>
        <dbReference type="ChEBI" id="CHEBI:29105"/>
    </ligand>
</feature>
<feature type="binding site" evidence="1">
    <location>
        <position position="92"/>
    </location>
    <ligand>
        <name>Zn(2+)</name>
        <dbReference type="ChEBI" id="CHEBI:29105"/>
    </ligand>
</feature>
<name>HYPA_SHEON</name>
<comment type="function">
    <text evidence="1">Involved in the maturation of [NiFe] hydrogenases. Required for nickel insertion into the metal center of the hydrogenase.</text>
</comment>
<comment type="similarity">
    <text evidence="1">Belongs to the HypA/HybF family.</text>
</comment>
<organism>
    <name type="scientific">Shewanella oneidensis (strain ATCC 700550 / JCM 31522 / CIP 106686 / LMG 19005 / NCIMB 14063 / MR-1)</name>
    <dbReference type="NCBI Taxonomy" id="211586"/>
    <lineage>
        <taxon>Bacteria</taxon>
        <taxon>Pseudomonadati</taxon>
        <taxon>Pseudomonadota</taxon>
        <taxon>Gammaproteobacteria</taxon>
        <taxon>Alteromonadales</taxon>
        <taxon>Shewanellaceae</taxon>
        <taxon>Shewanella</taxon>
    </lineage>
</organism>
<reference key="1">
    <citation type="journal article" date="2002" name="Nat. Biotechnol.">
        <title>Genome sequence of the dissimilatory metal ion-reducing bacterium Shewanella oneidensis.</title>
        <authorList>
            <person name="Heidelberg J.F."/>
            <person name="Paulsen I.T."/>
            <person name="Nelson K.E."/>
            <person name="Gaidos E.J."/>
            <person name="Nelson W.C."/>
            <person name="Read T.D."/>
            <person name="Eisen J.A."/>
            <person name="Seshadri R."/>
            <person name="Ward N.L."/>
            <person name="Methe B.A."/>
            <person name="Clayton R.A."/>
            <person name="Meyer T."/>
            <person name="Tsapin A."/>
            <person name="Scott J."/>
            <person name="Beanan M.J."/>
            <person name="Brinkac L.M."/>
            <person name="Daugherty S.C."/>
            <person name="DeBoy R.T."/>
            <person name="Dodson R.J."/>
            <person name="Durkin A.S."/>
            <person name="Haft D.H."/>
            <person name="Kolonay J.F."/>
            <person name="Madupu R."/>
            <person name="Peterson J.D."/>
            <person name="Umayam L.A."/>
            <person name="White O."/>
            <person name="Wolf A.M."/>
            <person name="Vamathevan J.J."/>
            <person name="Weidman J.F."/>
            <person name="Impraim M."/>
            <person name="Lee K."/>
            <person name="Berry K.J."/>
            <person name="Lee C."/>
            <person name="Mueller J."/>
            <person name="Khouri H.M."/>
            <person name="Gill J."/>
            <person name="Utterback T.R."/>
            <person name="McDonald L.A."/>
            <person name="Feldblyum T.V."/>
            <person name="Smith H.O."/>
            <person name="Venter J.C."/>
            <person name="Nealson K.H."/>
            <person name="Fraser C.M."/>
        </authorList>
    </citation>
    <scope>NUCLEOTIDE SEQUENCE [LARGE SCALE GENOMIC DNA]</scope>
    <source>
        <strain>ATCC 700550 / JCM 31522 / CIP 106686 / LMG 19005 / NCIMB 14063 / MR-1</strain>
    </source>
</reference>
<protein>
    <recommendedName>
        <fullName evidence="1">Hydrogenase maturation factor HypA</fullName>
    </recommendedName>
</protein>
<sequence>MHEYSIVSALIEQCEQYAKANQATKVTRVEIKLGVMSGVEPALLQTAFETFKLDGICREAKLCMTLQPLVIKCADCQQESVLDERSIVCPACNSYHTRVLDGEEMLLMQLEMEQAEDA</sequence>
<proteinExistence type="inferred from homology"/>
<keyword id="KW-0479">Metal-binding</keyword>
<keyword id="KW-0533">Nickel</keyword>
<keyword id="KW-1185">Reference proteome</keyword>
<keyword id="KW-0862">Zinc</keyword>
<gene>
    <name evidence="1" type="primary">hypA</name>
    <name type="ordered locus">SO_2089</name>
</gene>
<evidence type="ECO:0000255" key="1">
    <source>
        <dbReference type="HAMAP-Rule" id="MF_00213"/>
    </source>
</evidence>
<accession>Q8EF96</accession>
<dbReference type="EMBL" id="AE014299">
    <property type="protein sequence ID" value="AAN55136.1"/>
    <property type="molecule type" value="Genomic_DNA"/>
</dbReference>
<dbReference type="RefSeq" id="NP_717692.1">
    <property type="nucleotide sequence ID" value="NC_004347.2"/>
</dbReference>
<dbReference type="RefSeq" id="WP_011072153.1">
    <property type="nucleotide sequence ID" value="NC_004347.2"/>
</dbReference>
<dbReference type="SMR" id="Q8EF96"/>
<dbReference type="STRING" id="211586.SO_2089"/>
<dbReference type="PaxDb" id="211586-SO_2089"/>
<dbReference type="KEGG" id="son:SO_2089"/>
<dbReference type="PATRIC" id="fig|1028802.3.peg.1842"/>
<dbReference type="eggNOG" id="COG0375">
    <property type="taxonomic scope" value="Bacteria"/>
</dbReference>
<dbReference type="HOGENOM" id="CLU_126929_6_0_6"/>
<dbReference type="OrthoDB" id="288014at2"/>
<dbReference type="PhylomeDB" id="Q8EF96"/>
<dbReference type="BioCyc" id="SONE211586:G1GMP-1920-MONOMER"/>
<dbReference type="Proteomes" id="UP000008186">
    <property type="component" value="Chromosome"/>
</dbReference>
<dbReference type="GO" id="GO:0016151">
    <property type="term" value="F:nickel cation binding"/>
    <property type="evidence" value="ECO:0000318"/>
    <property type="project" value="GO_Central"/>
</dbReference>
<dbReference type="GO" id="GO:0008270">
    <property type="term" value="F:zinc ion binding"/>
    <property type="evidence" value="ECO:0000318"/>
    <property type="project" value="GO_Central"/>
</dbReference>
<dbReference type="GO" id="GO:0051604">
    <property type="term" value="P:protein maturation"/>
    <property type="evidence" value="ECO:0000318"/>
    <property type="project" value="GO_Central"/>
</dbReference>
<dbReference type="GO" id="GO:0036211">
    <property type="term" value="P:protein modification process"/>
    <property type="evidence" value="ECO:0007669"/>
    <property type="project" value="UniProtKB-UniRule"/>
</dbReference>
<dbReference type="Gene3D" id="3.30.2320.80">
    <property type="match status" value="1"/>
</dbReference>
<dbReference type="HAMAP" id="MF_00213">
    <property type="entry name" value="HypA_HybF"/>
    <property type="match status" value="1"/>
</dbReference>
<dbReference type="InterPro" id="IPR000688">
    <property type="entry name" value="HypA/HybF"/>
</dbReference>
<dbReference type="NCBIfam" id="TIGR00100">
    <property type="entry name" value="hypA"/>
    <property type="match status" value="1"/>
</dbReference>
<dbReference type="PANTHER" id="PTHR34535">
    <property type="entry name" value="HYDROGENASE MATURATION FACTOR HYPA"/>
    <property type="match status" value="1"/>
</dbReference>
<dbReference type="PANTHER" id="PTHR34535:SF3">
    <property type="entry name" value="HYDROGENASE MATURATION FACTOR HYPA"/>
    <property type="match status" value="1"/>
</dbReference>
<dbReference type="Pfam" id="PF01155">
    <property type="entry name" value="HypA"/>
    <property type="match status" value="1"/>
</dbReference>
<dbReference type="PIRSF" id="PIRSF004761">
    <property type="entry name" value="Hydrgn_mat_HypA"/>
    <property type="match status" value="1"/>
</dbReference>